<keyword id="KW-0012">Acyltransferase</keyword>
<keyword id="KW-0998">Cell outer membrane</keyword>
<keyword id="KW-0472">Membrane</keyword>
<keyword id="KW-1185">Reference proteome</keyword>
<keyword id="KW-0732">Signal</keyword>
<keyword id="KW-0808">Transferase</keyword>
<comment type="function">
    <text evidence="1">Transfers a palmitate residue from the sn-1 position of a phospholipid to the N-linked hydroxymyristate on the proximal unit of lipid A or its precursors.</text>
</comment>
<comment type="catalytic activity">
    <reaction evidence="1">
        <text>lipid A (E. coli) + a 1-hexadecanoyl-2-acyl-sn-glycero-3-phosphocholine = hepta-acyl lipid A (E. coli) + a 2-acyl-sn-glycero-3-phosphocholine</text>
        <dbReference type="Rhea" id="RHEA:46864"/>
        <dbReference type="ChEBI" id="CHEBI:57875"/>
        <dbReference type="ChEBI" id="CHEBI:77369"/>
        <dbReference type="ChEBI" id="CHEBI:87048"/>
        <dbReference type="ChEBI" id="CHEBI:134257"/>
        <dbReference type="EC" id="2.3.1.251"/>
    </reaction>
</comment>
<comment type="catalytic activity">
    <reaction evidence="1">
        <text>lipid IIA + a 1-hexadecanoyl-2-acyl-sn-glycero-3-phosphocholine = lipid IIB + a 2-acyl-sn-glycero-3-phosphocholine</text>
        <dbReference type="Rhea" id="RHEA:46872"/>
        <dbReference type="ChEBI" id="CHEBI:57875"/>
        <dbReference type="ChEBI" id="CHEBI:77369"/>
        <dbReference type="ChEBI" id="CHEBI:86226"/>
        <dbReference type="ChEBI" id="CHEBI:87058"/>
        <dbReference type="EC" id="2.3.1.251"/>
    </reaction>
</comment>
<comment type="catalytic activity">
    <reaction evidence="1">
        <text>lipid IVA (E. coli) + a 1-hexadecanoyl-2-acyl-sn-glycero-3-phosphocholine = lipid IVB (E. coli) + a 2-acyl-sn-glycero-3-phosphocholine</text>
        <dbReference type="Rhea" id="RHEA:46868"/>
        <dbReference type="ChEBI" id="CHEBI:57875"/>
        <dbReference type="ChEBI" id="CHEBI:58603"/>
        <dbReference type="ChEBI" id="CHEBI:77369"/>
        <dbReference type="ChEBI" id="CHEBI:87049"/>
        <dbReference type="EC" id="2.3.1.251"/>
    </reaction>
</comment>
<comment type="subunit">
    <text evidence="1">Homodimer.</text>
</comment>
<comment type="subcellular location">
    <subcellularLocation>
        <location evidence="1">Cell outer membrane</location>
    </subcellularLocation>
</comment>
<comment type="similarity">
    <text evidence="1">Belongs to the lipid A palmitoyltransferase family.</text>
</comment>
<proteinExistence type="inferred from homology"/>
<sequence>MNVSKYVAIFFFVFIQLISVGKVFANADEWMTTFRENIAQTWQQPEHYDLYIPAITWHARFAYDKEKTDRYNERPWGGGFGQSRWDEKGNWHGLYAMAFKDSWNKWEPIAGYGWESTWRPLADENFHLGLGFTAGVTARDNWNYIPLPVLLPLASVGYGPATFQMTYIPGTYNNGNVYFAWMRFQF</sequence>
<gene>
    <name evidence="1" type="primary">pagP</name>
    <name type="synonym">crcA</name>
    <name type="ordered locus">c0713</name>
</gene>
<accession>Q8FJZ7</accession>
<protein>
    <recommendedName>
        <fullName evidence="1">Lipid A palmitoyltransferase PagP</fullName>
        <ecNumber evidence="1">2.3.1.251</ecNumber>
    </recommendedName>
    <alternativeName>
        <fullName evidence="1">Lipid A acylation protein</fullName>
    </alternativeName>
</protein>
<dbReference type="EC" id="2.3.1.251" evidence="1"/>
<dbReference type="EMBL" id="AE014075">
    <property type="protein sequence ID" value="AAN79186.1"/>
    <property type="molecule type" value="Genomic_DNA"/>
</dbReference>
<dbReference type="RefSeq" id="WP_001103088.1">
    <property type="nucleotide sequence ID" value="NZ_CP051263.1"/>
</dbReference>
<dbReference type="SMR" id="Q8FJZ7"/>
<dbReference type="STRING" id="199310.c0713"/>
<dbReference type="KEGG" id="ecc:c0713"/>
<dbReference type="eggNOG" id="ENOG502Z7SY">
    <property type="taxonomic scope" value="Bacteria"/>
</dbReference>
<dbReference type="HOGENOM" id="CLU_104099_0_0_6"/>
<dbReference type="BioCyc" id="ECOL199310:C0713-MONOMER"/>
<dbReference type="Proteomes" id="UP000001410">
    <property type="component" value="Chromosome"/>
</dbReference>
<dbReference type="GO" id="GO:0009279">
    <property type="term" value="C:cell outer membrane"/>
    <property type="evidence" value="ECO:0007669"/>
    <property type="project" value="UniProtKB-SubCell"/>
</dbReference>
<dbReference type="GO" id="GO:0016416">
    <property type="term" value="F:O-palmitoyltransferase activity"/>
    <property type="evidence" value="ECO:0007669"/>
    <property type="project" value="UniProtKB-UniRule"/>
</dbReference>
<dbReference type="GO" id="GO:0009245">
    <property type="term" value="P:lipid A biosynthetic process"/>
    <property type="evidence" value="ECO:0007669"/>
    <property type="project" value="UniProtKB-UniRule"/>
</dbReference>
<dbReference type="FunFam" id="2.40.160.20:FF:000002">
    <property type="entry name" value="Lipid A palmitoyltransferase PagP"/>
    <property type="match status" value="1"/>
</dbReference>
<dbReference type="Gene3D" id="2.40.160.20">
    <property type="match status" value="1"/>
</dbReference>
<dbReference type="HAMAP" id="MF_00837">
    <property type="entry name" value="PagP_transferase"/>
    <property type="match status" value="1"/>
</dbReference>
<dbReference type="InterPro" id="IPR009746">
    <property type="entry name" value="LipidA_acyl_PagP"/>
</dbReference>
<dbReference type="InterPro" id="IPR011250">
    <property type="entry name" value="OMP/PagP_b-brl"/>
</dbReference>
<dbReference type="NCBIfam" id="NF008271">
    <property type="entry name" value="PRK11045.1"/>
    <property type="match status" value="1"/>
</dbReference>
<dbReference type="Pfam" id="PF07017">
    <property type="entry name" value="PagP"/>
    <property type="match status" value="1"/>
</dbReference>
<dbReference type="SUPFAM" id="SSF56925">
    <property type="entry name" value="OMPA-like"/>
    <property type="match status" value="1"/>
</dbReference>
<feature type="signal peptide" evidence="1">
    <location>
        <begin position="1"/>
        <end position="25"/>
    </location>
</feature>
<feature type="chain" id="PRO_0000414453" description="Lipid A palmitoyltransferase PagP">
    <location>
        <begin position="26"/>
        <end position="186"/>
    </location>
</feature>
<feature type="active site" evidence="1">
    <location>
        <position position="58"/>
    </location>
</feature>
<feature type="active site" evidence="1">
    <location>
        <position position="101"/>
    </location>
</feature>
<feature type="active site" evidence="1">
    <location>
        <position position="102"/>
    </location>
</feature>
<feature type="site" description="Role in lipopolysaccharide recognition" evidence="1">
    <location>
        <position position="67"/>
    </location>
</feature>
<feature type="site" description="Role in the phospholipid gating" evidence="1">
    <location>
        <position position="172"/>
    </location>
</feature>
<evidence type="ECO:0000255" key="1">
    <source>
        <dbReference type="HAMAP-Rule" id="MF_00837"/>
    </source>
</evidence>
<reference key="1">
    <citation type="journal article" date="2002" name="Proc. Natl. Acad. Sci. U.S.A.">
        <title>Extensive mosaic structure revealed by the complete genome sequence of uropathogenic Escherichia coli.</title>
        <authorList>
            <person name="Welch R.A."/>
            <person name="Burland V."/>
            <person name="Plunkett G. III"/>
            <person name="Redford P."/>
            <person name="Roesch P."/>
            <person name="Rasko D."/>
            <person name="Buckles E.L."/>
            <person name="Liou S.-R."/>
            <person name="Boutin A."/>
            <person name="Hackett J."/>
            <person name="Stroud D."/>
            <person name="Mayhew G.F."/>
            <person name="Rose D.J."/>
            <person name="Zhou S."/>
            <person name="Schwartz D.C."/>
            <person name="Perna N.T."/>
            <person name="Mobley H.L.T."/>
            <person name="Donnenberg M.S."/>
            <person name="Blattner F.R."/>
        </authorList>
    </citation>
    <scope>NUCLEOTIDE SEQUENCE [LARGE SCALE GENOMIC DNA]</scope>
    <source>
        <strain>CFT073 / ATCC 700928 / UPEC</strain>
    </source>
</reference>
<organism>
    <name type="scientific">Escherichia coli O6:H1 (strain CFT073 / ATCC 700928 / UPEC)</name>
    <dbReference type="NCBI Taxonomy" id="199310"/>
    <lineage>
        <taxon>Bacteria</taxon>
        <taxon>Pseudomonadati</taxon>
        <taxon>Pseudomonadota</taxon>
        <taxon>Gammaproteobacteria</taxon>
        <taxon>Enterobacterales</taxon>
        <taxon>Enterobacteriaceae</taxon>
        <taxon>Escherichia</taxon>
    </lineage>
</organism>
<name>PAGP_ECOL6</name>